<name>HKM7_ASPHA</name>
<proteinExistence type="evidence at protein level"/>
<reference key="1">
    <citation type="submission" date="2019-04" db="EMBL/GenBank/DDBJ databases">
        <authorList>
            <person name="Gilchrist C.L.M."/>
            <person name="Chooi Y.H."/>
        </authorList>
    </citation>
    <scope>NUCLEOTIDE SEQUENCE [LARGE SCALE GENOMIC DNA]</scope>
    <source>
        <strain>FRR 3425 / CBS 142004 / DTO 360-G7</strain>
    </source>
</reference>
<reference key="2">
    <citation type="journal article" date="2021" name="Org. Biomol. Chem.">
        <title>Hancockiamides: phenylpropanoid piperazines from Aspergillus hancockii are biosynthesised by a versatile dual single-module NRPS pathway.</title>
        <authorList>
            <person name="Li H."/>
            <person name="Lacey A.E."/>
            <person name="Shu S."/>
            <person name="Kalaitzis J.A."/>
            <person name="Vuong D."/>
            <person name="Crombie A."/>
            <person name="Hu J."/>
            <person name="Gilchrist C.L.M."/>
            <person name="Lacey E."/>
            <person name="Piggott A.M."/>
            <person name="Chooi Y.H."/>
        </authorList>
    </citation>
    <scope>FUNCTION</scope>
    <scope>PATHWAY</scope>
    <scope>BIOTECHNOLOGY</scope>
</reference>
<dbReference type="EC" id="1.-.-.-" evidence="5"/>
<dbReference type="EMBL" id="MBFL02000005">
    <property type="protein sequence ID" value="KAF7597143.1"/>
    <property type="molecule type" value="Genomic_DNA"/>
</dbReference>
<dbReference type="SMR" id="P0DUL5"/>
<dbReference type="OrthoDB" id="1716816at2759"/>
<dbReference type="GO" id="GO:0071949">
    <property type="term" value="F:FAD binding"/>
    <property type="evidence" value="ECO:0007669"/>
    <property type="project" value="InterPro"/>
</dbReference>
<dbReference type="GO" id="GO:0016709">
    <property type="term" value="F:oxidoreductase activity, acting on paired donors, with incorporation or reduction of molecular oxygen, NAD(P)H as one donor, and incorporation of one atom of oxygen"/>
    <property type="evidence" value="ECO:0007669"/>
    <property type="project" value="UniProtKB-ARBA"/>
</dbReference>
<dbReference type="CDD" id="cd02979">
    <property type="entry name" value="PHOX_C"/>
    <property type="match status" value="1"/>
</dbReference>
<dbReference type="Gene3D" id="3.40.30.20">
    <property type="match status" value="1"/>
</dbReference>
<dbReference type="Gene3D" id="3.30.9.10">
    <property type="entry name" value="D-Amino Acid Oxidase, subunit A, domain 2"/>
    <property type="match status" value="1"/>
</dbReference>
<dbReference type="Gene3D" id="3.50.50.60">
    <property type="entry name" value="FAD/NAD(P)-binding domain"/>
    <property type="match status" value="1"/>
</dbReference>
<dbReference type="InterPro" id="IPR002938">
    <property type="entry name" value="FAD-bd"/>
</dbReference>
<dbReference type="InterPro" id="IPR036188">
    <property type="entry name" value="FAD/NAD-bd_sf"/>
</dbReference>
<dbReference type="InterPro" id="IPR012941">
    <property type="entry name" value="Phe_hydrox_C_dim_dom"/>
</dbReference>
<dbReference type="InterPro" id="IPR038220">
    <property type="entry name" value="PHOX_C_sf"/>
</dbReference>
<dbReference type="InterPro" id="IPR050641">
    <property type="entry name" value="RIFMO-like"/>
</dbReference>
<dbReference type="InterPro" id="IPR036249">
    <property type="entry name" value="Thioredoxin-like_sf"/>
</dbReference>
<dbReference type="PANTHER" id="PTHR43004:SF20">
    <property type="entry name" value="2-MONOOXYGENASE, PUTATIVE (AFU_ORTHOLOGUE AFUA_1G13660)-RELATED"/>
    <property type="match status" value="1"/>
</dbReference>
<dbReference type="PANTHER" id="PTHR43004">
    <property type="entry name" value="TRK SYSTEM POTASSIUM UPTAKE PROTEIN"/>
    <property type="match status" value="1"/>
</dbReference>
<dbReference type="Pfam" id="PF01494">
    <property type="entry name" value="FAD_binding_3"/>
    <property type="match status" value="1"/>
</dbReference>
<dbReference type="Pfam" id="PF07976">
    <property type="entry name" value="Phe_hydrox_dim"/>
    <property type="match status" value="1"/>
</dbReference>
<dbReference type="PRINTS" id="PR00420">
    <property type="entry name" value="RNGMNOXGNASE"/>
</dbReference>
<dbReference type="SUPFAM" id="SSF54373">
    <property type="entry name" value="FAD-linked reductases, C-terminal domain"/>
    <property type="match status" value="1"/>
</dbReference>
<dbReference type="SUPFAM" id="SSF51905">
    <property type="entry name" value="FAD/NAD(P)-binding domain"/>
    <property type="match status" value="1"/>
</dbReference>
<dbReference type="SUPFAM" id="SSF52833">
    <property type="entry name" value="Thioredoxin-like"/>
    <property type="match status" value="1"/>
</dbReference>
<keyword id="KW-0274">FAD</keyword>
<keyword id="KW-0285">Flavoprotein</keyword>
<keyword id="KW-0503">Monooxygenase</keyword>
<keyword id="KW-0560">Oxidoreductase</keyword>
<accession>P0DUL5</accession>
<sequence length="532" mass="59262">MEIFESFGIEGEVTKQWEPATDEILWCRNESGTLSRMERFRNEPPVGVKWTHGTLQQGRVEEIMKKRITEISGVEVEYSTELSDLTINTRESSNSKASACSVTIRSVADDQEAHRSSETIRARYIIGADGGRSSIRDLMGVAMEGTKGTAIWGVMDILGGSDFPDFGATSVVRSDSDGAVDFVRREEGLTRIYVELNKCAAGWEALERDTITPELILEKCRYIIRPYKLEVDYVEWWSSFTVWQRLSKSMIVHDRVFLVGDAVHTHSPLCGMGMNTGIQDSFNLGWKLAGVVQGQLNYDILQTYETERRPVAEALLDTDRTVLDLFHAPLGPEAEALLAKVPALQVYLGGRGICYHESVLTCRLAQTLGDLTAGECLPDVTVFDYATGRPSSTHSWIKGNGGWAIIVWAGDVSRPSQMNLVQSLSRDMIELRDSLGKSGSMIDFFLIHCSAWPSVELADFPPLFFPTTKTIGRPNGRIFVDEKAVYDGLHISRAEGGVAIVRPDKHIAWAGGLQEVDSLQRYLRQVFRPQPE</sequence>
<protein>
    <recommendedName>
        <fullName evidence="3">FAD-dependent monooxygenase hkm7</fullName>
        <ecNumber evidence="5">1.-.-.-</ecNumber>
    </recommendedName>
    <alternativeName>
        <fullName evidence="3">Hancockiamides biosynthesis cluster protein 7</fullName>
    </alternativeName>
</protein>
<evidence type="ECO:0000250" key="1">
    <source>
        <dbReference type="UniProtKB" id="Q6SSJ6"/>
    </source>
</evidence>
<evidence type="ECO:0000269" key="2">
    <source>
    </source>
</evidence>
<evidence type="ECO:0000303" key="3">
    <source>
    </source>
</evidence>
<evidence type="ECO:0000305" key="4"/>
<evidence type="ECO:0000305" key="5">
    <source>
    </source>
</evidence>
<comment type="function">
    <text evidence="2 5">FAD-dependent monooxygenase; part of the gene cluster that mediates the biosynthesis of hancockiamides, an unusual new family of N-cinnamoylated piperazines (PubMed:33242032). The NRPS hkm10 and the NmrA-like reductase hkm9 are proposed to convert two molecules of L-Phe to the intermediary piperazine called xenocockiamide A (Probable). Xenocockiamide A is then converted to hancockiamide D via a series of hydroxylations and O-methylations (Probable). The tyrosinase hkm6 may catalyze an aromatic hydroxylation, then the 2-oxoglutarate-dependent Fe(II) dioxygenase hkm4 and the FAD-dependent phenol hydroxylase hkm7 may catalyze consecutive hydroxylations to install 2 more hydroxy groups, and the methyltransferase hkm8 probably catalyzes two methylations using 2 molecules of S-adenosyl-L-methionine (SAM) (Probable). The NRPS hkm11 activates and transfers trans-cinnamate supplied by the PAL hkm12 to hancockiamide D and produces hancockiamide A (PubMed:33242032). NRPS Hkm11 has the flexibility to tolerate the bulky hancockiamide G as a substrate and the absence of the acetyl-transferase hkm3 opens up the opportunity for hkm11 to introduce a second N-cinnamoyl moiety (PubMed:33242032). The cytochrome P450 monooxygenase hkm5 catalyzes the methylenedioxy bridge formation, converting hancockiamide A into hancockiamide G (PubMed:33242032). Hkm5 can also convert hancockiamide B into hancockiamide C, and hancockiamide D into hancockiamide H (PubMed:33242032). The N-acetyltransferase hkm3 finally transfers an acetyl group to 1-N of piperazine, converting hancockiamide A into hancockiamide B and hancockiamide G into hancockiamide C (PubMed:33242032).</text>
</comment>
<comment type="pathway">
    <text evidence="5">Secondary metabolite biosynthesis.</text>
</comment>
<comment type="biotechnology">
    <text evidence="2">Hancockiamide D displays potent cytotoxic activity against murine myeloma NS-1 cells, suggesting a potential antitumour application (PubMed:33242032). More interestingly, hancockiamide C, the likely end metabolite of the hkm pathway, shows potent Arabidopsis thaliana seed anti-germination activity, but is inactive against the monocot Eragrostis tef seed, suggesting that it could be a herbicidal lead targeting monocots (PubMed:33242032). The herbicidal activity of hancockiamide C could be due to its phenylpropanoid-like structural features, which may act on the plant lignan pathways, and hence warrants further investigations (PubMed:33242032).</text>
</comment>
<comment type="similarity">
    <text evidence="4">Belongs to the PheA/TfdB FAD monooxygenase family.</text>
</comment>
<organism>
    <name type="scientific">Aspergillus hancockii</name>
    <dbReference type="NCBI Taxonomy" id="1873369"/>
    <lineage>
        <taxon>Eukaryota</taxon>
        <taxon>Fungi</taxon>
        <taxon>Dikarya</taxon>
        <taxon>Ascomycota</taxon>
        <taxon>Pezizomycotina</taxon>
        <taxon>Eurotiomycetes</taxon>
        <taxon>Eurotiomycetidae</taxon>
        <taxon>Eurotiales</taxon>
        <taxon>Aspergillaceae</taxon>
        <taxon>Aspergillus</taxon>
        <taxon>Aspergillus subgen. Circumdati</taxon>
    </lineage>
</organism>
<feature type="chain" id="PRO_0000452934" description="FAD-dependent monooxygenase hkm7">
    <location>
        <begin position="1"/>
        <end position="532"/>
    </location>
</feature>
<feature type="binding site" evidence="1">
    <location>
        <begin position="191"/>
        <end position="193"/>
    </location>
    <ligand>
        <name>FAD</name>
        <dbReference type="ChEBI" id="CHEBI:57692"/>
    </ligand>
</feature>
<feature type="binding site" evidence="1">
    <location>
        <position position="261"/>
    </location>
    <ligand>
        <name>FAD</name>
        <dbReference type="ChEBI" id="CHEBI:57692"/>
    </ligand>
</feature>